<protein>
    <recommendedName>
        <fullName evidence="1">tRNA-2-methylthio-N(6)-dimethylallyladenosine synthase</fullName>
        <ecNumber evidence="1">2.8.4.3</ecNumber>
    </recommendedName>
    <alternativeName>
        <fullName evidence="1">(Dimethylallyl)adenosine tRNA methylthiotransferase MiaB</fullName>
    </alternativeName>
    <alternativeName>
        <fullName evidence="1">tRNA-i(6)A37 methylthiotransferase</fullName>
    </alternativeName>
</protein>
<keyword id="KW-0004">4Fe-4S</keyword>
<keyword id="KW-0963">Cytoplasm</keyword>
<keyword id="KW-0408">Iron</keyword>
<keyword id="KW-0411">Iron-sulfur</keyword>
<keyword id="KW-0479">Metal-binding</keyword>
<keyword id="KW-0949">S-adenosyl-L-methionine</keyword>
<keyword id="KW-0808">Transferase</keyword>
<keyword id="KW-0819">tRNA processing</keyword>
<proteinExistence type="inferred from homology"/>
<dbReference type="EC" id="2.8.4.3" evidence="1"/>
<dbReference type="EMBL" id="CP000266">
    <property type="protein sequence ID" value="ABF02906.1"/>
    <property type="molecule type" value="Genomic_DNA"/>
</dbReference>
<dbReference type="RefSeq" id="WP_000162739.1">
    <property type="nucleotide sequence ID" value="NC_008258.1"/>
</dbReference>
<dbReference type="SMR" id="Q0T6S0"/>
<dbReference type="KEGG" id="sfv:SFV_0666"/>
<dbReference type="HOGENOM" id="CLU_018697_2_0_6"/>
<dbReference type="Proteomes" id="UP000000659">
    <property type="component" value="Chromosome"/>
</dbReference>
<dbReference type="GO" id="GO:0005829">
    <property type="term" value="C:cytosol"/>
    <property type="evidence" value="ECO:0007669"/>
    <property type="project" value="TreeGrafter"/>
</dbReference>
<dbReference type="GO" id="GO:0051539">
    <property type="term" value="F:4 iron, 4 sulfur cluster binding"/>
    <property type="evidence" value="ECO:0007669"/>
    <property type="project" value="UniProtKB-UniRule"/>
</dbReference>
<dbReference type="GO" id="GO:0046872">
    <property type="term" value="F:metal ion binding"/>
    <property type="evidence" value="ECO:0007669"/>
    <property type="project" value="UniProtKB-KW"/>
</dbReference>
<dbReference type="GO" id="GO:0035597">
    <property type="term" value="F:N6-isopentenyladenosine methylthiotransferase activity"/>
    <property type="evidence" value="ECO:0007669"/>
    <property type="project" value="TreeGrafter"/>
</dbReference>
<dbReference type="CDD" id="cd01335">
    <property type="entry name" value="Radical_SAM"/>
    <property type="match status" value="1"/>
</dbReference>
<dbReference type="FunFam" id="3.40.50.12160:FF:000001">
    <property type="entry name" value="tRNA-2-methylthio-N(6)-dimethylallyladenosine synthase"/>
    <property type="match status" value="1"/>
</dbReference>
<dbReference type="FunFam" id="3.80.30.20:FF:000001">
    <property type="entry name" value="tRNA-2-methylthio-N(6)-dimethylallyladenosine synthase 2"/>
    <property type="match status" value="1"/>
</dbReference>
<dbReference type="Gene3D" id="3.40.50.12160">
    <property type="entry name" value="Methylthiotransferase, N-terminal domain"/>
    <property type="match status" value="1"/>
</dbReference>
<dbReference type="Gene3D" id="3.80.30.20">
    <property type="entry name" value="tm_1862 like domain"/>
    <property type="match status" value="1"/>
</dbReference>
<dbReference type="HAMAP" id="MF_01864">
    <property type="entry name" value="tRNA_metthiotr_MiaB"/>
    <property type="match status" value="1"/>
</dbReference>
<dbReference type="InterPro" id="IPR006638">
    <property type="entry name" value="Elp3/MiaA/NifB-like_rSAM"/>
</dbReference>
<dbReference type="InterPro" id="IPR005839">
    <property type="entry name" value="Methylthiotransferase"/>
</dbReference>
<dbReference type="InterPro" id="IPR020612">
    <property type="entry name" value="Methylthiotransferase_CS"/>
</dbReference>
<dbReference type="InterPro" id="IPR013848">
    <property type="entry name" value="Methylthiotransferase_N"/>
</dbReference>
<dbReference type="InterPro" id="IPR038135">
    <property type="entry name" value="Methylthiotransferase_N_sf"/>
</dbReference>
<dbReference type="InterPro" id="IPR006463">
    <property type="entry name" value="MiaB_methiolase"/>
</dbReference>
<dbReference type="InterPro" id="IPR007197">
    <property type="entry name" value="rSAM"/>
</dbReference>
<dbReference type="InterPro" id="IPR023404">
    <property type="entry name" value="rSAM_horseshoe"/>
</dbReference>
<dbReference type="InterPro" id="IPR002792">
    <property type="entry name" value="TRAM_dom"/>
</dbReference>
<dbReference type="NCBIfam" id="TIGR01574">
    <property type="entry name" value="miaB-methiolase"/>
    <property type="match status" value="1"/>
</dbReference>
<dbReference type="NCBIfam" id="TIGR00089">
    <property type="entry name" value="MiaB/RimO family radical SAM methylthiotransferase"/>
    <property type="match status" value="1"/>
</dbReference>
<dbReference type="PANTHER" id="PTHR43020">
    <property type="entry name" value="CDK5 REGULATORY SUBUNIT-ASSOCIATED PROTEIN 1"/>
    <property type="match status" value="1"/>
</dbReference>
<dbReference type="PANTHER" id="PTHR43020:SF2">
    <property type="entry name" value="MITOCHONDRIAL TRNA METHYLTHIOTRANSFERASE CDK5RAP1"/>
    <property type="match status" value="1"/>
</dbReference>
<dbReference type="Pfam" id="PF04055">
    <property type="entry name" value="Radical_SAM"/>
    <property type="match status" value="1"/>
</dbReference>
<dbReference type="Pfam" id="PF01938">
    <property type="entry name" value="TRAM"/>
    <property type="match status" value="1"/>
</dbReference>
<dbReference type="Pfam" id="PF00919">
    <property type="entry name" value="UPF0004"/>
    <property type="match status" value="1"/>
</dbReference>
<dbReference type="SFLD" id="SFLDF00273">
    <property type="entry name" value="(dimethylallyl)adenosine_tRNA"/>
    <property type="match status" value="1"/>
</dbReference>
<dbReference type="SFLD" id="SFLDG01082">
    <property type="entry name" value="B12-binding_domain_containing"/>
    <property type="match status" value="1"/>
</dbReference>
<dbReference type="SFLD" id="SFLDS00029">
    <property type="entry name" value="Radical_SAM"/>
    <property type="match status" value="1"/>
</dbReference>
<dbReference type="SMART" id="SM00729">
    <property type="entry name" value="Elp3"/>
    <property type="match status" value="1"/>
</dbReference>
<dbReference type="SUPFAM" id="SSF102114">
    <property type="entry name" value="Radical SAM enzymes"/>
    <property type="match status" value="1"/>
</dbReference>
<dbReference type="PROSITE" id="PS51449">
    <property type="entry name" value="MTTASE_N"/>
    <property type="match status" value="1"/>
</dbReference>
<dbReference type="PROSITE" id="PS01278">
    <property type="entry name" value="MTTASE_RADICAL"/>
    <property type="match status" value="1"/>
</dbReference>
<dbReference type="PROSITE" id="PS51918">
    <property type="entry name" value="RADICAL_SAM"/>
    <property type="match status" value="1"/>
</dbReference>
<dbReference type="PROSITE" id="PS50926">
    <property type="entry name" value="TRAM"/>
    <property type="match status" value="1"/>
</dbReference>
<name>MIAB_SHIF8</name>
<feature type="chain" id="PRO_0000374554" description="tRNA-2-methylthio-N(6)-dimethylallyladenosine synthase">
    <location>
        <begin position="1"/>
        <end position="474"/>
    </location>
</feature>
<feature type="domain" description="MTTase N-terminal" evidence="1">
    <location>
        <begin position="3"/>
        <end position="120"/>
    </location>
</feature>
<feature type="domain" description="Radical SAM core" evidence="2">
    <location>
        <begin position="143"/>
        <end position="375"/>
    </location>
</feature>
<feature type="domain" description="TRAM" evidence="1">
    <location>
        <begin position="378"/>
        <end position="441"/>
    </location>
</feature>
<feature type="binding site" evidence="1">
    <location>
        <position position="12"/>
    </location>
    <ligand>
        <name>[4Fe-4S] cluster</name>
        <dbReference type="ChEBI" id="CHEBI:49883"/>
        <label>1</label>
    </ligand>
</feature>
<feature type="binding site" evidence="1">
    <location>
        <position position="49"/>
    </location>
    <ligand>
        <name>[4Fe-4S] cluster</name>
        <dbReference type="ChEBI" id="CHEBI:49883"/>
        <label>1</label>
    </ligand>
</feature>
<feature type="binding site" evidence="1">
    <location>
        <position position="83"/>
    </location>
    <ligand>
        <name>[4Fe-4S] cluster</name>
        <dbReference type="ChEBI" id="CHEBI:49883"/>
        <label>1</label>
    </ligand>
</feature>
<feature type="binding site" evidence="1">
    <location>
        <position position="157"/>
    </location>
    <ligand>
        <name>[4Fe-4S] cluster</name>
        <dbReference type="ChEBI" id="CHEBI:49883"/>
        <label>2</label>
        <note>4Fe-4S-S-AdoMet</note>
    </ligand>
</feature>
<feature type="binding site" evidence="1">
    <location>
        <position position="161"/>
    </location>
    <ligand>
        <name>[4Fe-4S] cluster</name>
        <dbReference type="ChEBI" id="CHEBI:49883"/>
        <label>2</label>
        <note>4Fe-4S-S-AdoMet</note>
    </ligand>
</feature>
<feature type="binding site" evidence="1">
    <location>
        <position position="164"/>
    </location>
    <ligand>
        <name>[4Fe-4S] cluster</name>
        <dbReference type="ChEBI" id="CHEBI:49883"/>
        <label>2</label>
        <note>4Fe-4S-S-AdoMet</note>
    </ligand>
</feature>
<comment type="function">
    <text evidence="1">Catalyzes the methylthiolation of N6-(dimethylallyl)adenosine (i(6)A), leading to the formation of 2-methylthio-N6-(dimethylallyl)adenosine (ms(2)i(6)A) at position 37 in tRNAs that read codons beginning with uridine.</text>
</comment>
<comment type="catalytic activity">
    <reaction evidence="1">
        <text>N(6)-dimethylallyladenosine(37) in tRNA + (sulfur carrier)-SH + AH2 + 2 S-adenosyl-L-methionine = 2-methylsulfanyl-N(6)-dimethylallyladenosine(37) in tRNA + (sulfur carrier)-H + 5'-deoxyadenosine + L-methionine + A + S-adenosyl-L-homocysteine + 2 H(+)</text>
        <dbReference type="Rhea" id="RHEA:37067"/>
        <dbReference type="Rhea" id="RHEA-COMP:10375"/>
        <dbReference type="Rhea" id="RHEA-COMP:10376"/>
        <dbReference type="Rhea" id="RHEA-COMP:14737"/>
        <dbReference type="Rhea" id="RHEA-COMP:14739"/>
        <dbReference type="ChEBI" id="CHEBI:13193"/>
        <dbReference type="ChEBI" id="CHEBI:15378"/>
        <dbReference type="ChEBI" id="CHEBI:17319"/>
        <dbReference type="ChEBI" id="CHEBI:17499"/>
        <dbReference type="ChEBI" id="CHEBI:29917"/>
        <dbReference type="ChEBI" id="CHEBI:57844"/>
        <dbReference type="ChEBI" id="CHEBI:57856"/>
        <dbReference type="ChEBI" id="CHEBI:59789"/>
        <dbReference type="ChEBI" id="CHEBI:64428"/>
        <dbReference type="ChEBI" id="CHEBI:74415"/>
        <dbReference type="ChEBI" id="CHEBI:74417"/>
        <dbReference type="EC" id="2.8.4.3"/>
    </reaction>
</comment>
<comment type="cofactor">
    <cofactor evidence="1">
        <name>[4Fe-4S] cluster</name>
        <dbReference type="ChEBI" id="CHEBI:49883"/>
    </cofactor>
    <text evidence="1">Binds 2 [4Fe-4S] clusters. One cluster is coordinated with 3 cysteines and an exchangeable S-adenosyl-L-methionine.</text>
</comment>
<comment type="subunit">
    <text evidence="1">Monomer.</text>
</comment>
<comment type="subcellular location">
    <subcellularLocation>
        <location evidence="1">Cytoplasm</location>
    </subcellularLocation>
</comment>
<comment type="similarity">
    <text evidence="1">Belongs to the methylthiotransferase family. MiaB subfamily.</text>
</comment>
<evidence type="ECO:0000255" key="1">
    <source>
        <dbReference type="HAMAP-Rule" id="MF_01864"/>
    </source>
</evidence>
<evidence type="ECO:0000255" key="2">
    <source>
        <dbReference type="PROSITE-ProRule" id="PRU01266"/>
    </source>
</evidence>
<reference key="1">
    <citation type="journal article" date="2006" name="BMC Genomics">
        <title>Complete genome sequence of Shigella flexneri 5b and comparison with Shigella flexneri 2a.</title>
        <authorList>
            <person name="Nie H."/>
            <person name="Yang F."/>
            <person name="Zhang X."/>
            <person name="Yang J."/>
            <person name="Chen L."/>
            <person name="Wang J."/>
            <person name="Xiong Z."/>
            <person name="Peng J."/>
            <person name="Sun L."/>
            <person name="Dong J."/>
            <person name="Xue Y."/>
            <person name="Xu X."/>
            <person name="Chen S."/>
            <person name="Yao Z."/>
            <person name="Shen Y."/>
            <person name="Jin Q."/>
        </authorList>
    </citation>
    <scope>NUCLEOTIDE SEQUENCE [LARGE SCALE GENOMIC DNA]</scope>
    <source>
        <strain>8401</strain>
    </source>
</reference>
<organism>
    <name type="scientific">Shigella flexneri serotype 5b (strain 8401)</name>
    <dbReference type="NCBI Taxonomy" id="373384"/>
    <lineage>
        <taxon>Bacteria</taxon>
        <taxon>Pseudomonadati</taxon>
        <taxon>Pseudomonadota</taxon>
        <taxon>Gammaproteobacteria</taxon>
        <taxon>Enterobacterales</taxon>
        <taxon>Enterobacteriaceae</taxon>
        <taxon>Shigella</taxon>
    </lineage>
</organism>
<accession>Q0T6S0</accession>
<gene>
    <name evidence="1" type="primary">miaB</name>
    <name type="ordered locus">SFV_0666</name>
</gene>
<sequence>MTKKLHIKTWGCQMNEYDSSKMADLLDATHGYQLTDVAEEADVLLLNTCSIREKAQEKVFHQLGRWKLLKEKNPDLIIGVGGCVASQEGEHIRQRAHYVDIIFGPQTLHRLPEMINSVRGDRSPVVDISFPEIEKFDRLPEPRAEGPTAFVSIMEGCNKYCTYCVVPYTRGEEVSRPSDDILFEIAQLAAQGVREVNLLGQNVNAWRGENYDGTTGSFADLLRLVAAIDGIDRIRFTTSHPIEFTDDIIEVYRDTPELVSFLHLPVQSGSDRILNLMGRTHTALEYKAIIRKLRAARPDIQISSDFIVGFPGETTEDFEKTMKLIADVNFDMSYSFIFSARPGTPAADMVDDVPEEEKKQRLYILQERINQQAMAWSRRMLGTTQRILVEGTSRKSIMELSGRTENNRVVNFEGTPDMIGKFVDVEITDVYPNSLRGKVVRTEDEMGLRMAETPESVIARTRKENDLGVGYYQP</sequence>